<gene>
    <name evidence="1" type="primary">mscL</name>
    <name type="ordered locus">XAC3308</name>
</gene>
<protein>
    <recommendedName>
        <fullName evidence="1">Large-conductance mechanosensitive channel</fullName>
    </recommendedName>
</protein>
<dbReference type="EMBL" id="AE008923">
    <property type="protein sequence ID" value="AAM38151.1"/>
    <property type="molecule type" value="Genomic_DNA"/>
</dbReference>
<dbReference type="RefSeq" id="WP_003487203.1">
    <property type="nucleotide sequence ID" value="NC_003919.1"/>
</dbReference>
<dbReference type="SMR" id="Q8PHE9"/>
<dbReference type="GeneID" id="97511511"/>
<dbReference type="KEGG" id="xac:XAC3308"/>
<dbReference type="eggNOG" id="COG1970">
    <property type="taxonomic scope" value="Bacteria"/>
</dbReference>
<dbReference type="HOGENOM" id="CLU_095787_0_0_6"/>
<dbReference type="Proteomes" id="UP000000576">
    <property type="component" value="Chromosome"/>
</dbReference>
<dbReference type="GO" id="GO:0005886">
    <property type="term" value="C:plasma membrane"/>
    <property type="evidence" value="ECO:0007669"/>
    <property type="project" value="UniProtKB-SubCell"/>
</dbReference>
<dbReference type="GO" id="GO:0008381">
    <property type="term" value="F:mechanosensitive monoatomic ion channel activity"/>
    <property type="evidence" value="ECO:0007669"/>
    <property type="project" value="UniProtKB-UniRule"/>
</dbReference>
<dbReference type="FunFam" id="1.10.1200.120:FF:000001">
    <property type="entry name" value="Large-conductance mechanosensitive channel"/>
    <property type="match status" value="1"/>
</dbReference>
<dbReference type="Gene3D" id="1.10.1200.120">
    <property type="entry name" value="Large-conductance mechanosensitive channel, MscL, domain 1"/>
    <property type="match status" value="1"/>
</dbReference>
<dbReference type="HAMAP" id="MF_00115">
    <property type="entry name" value="MscL"/>
    <property type="match status" value="1"/>
</dbReference>
<dbReference type="InterPro" id="IPR019823">
    <property type="entry name" value="Mechanosensitive_channel_CS"/>
</dbReference>
<dbReference type="InterPro" id="IPR001185">
    <property type="entry name" value="MS_channel"/>
</dbReference>
<dbReference type="InterPro" id="IPR037673">
    <property type="entry name" value="MSC/AndL"/>
</dbReference>
<dbReference type="InterPro" id="IPR036019">
    <property type="entry name" value="MscL_channel"/>
</dbReference>
<dbReference type="NCBIfam" id="TIGR00220">
    <property type="entry name" value="mscL"/>
    <property type="match status" value="1"/>
</dbReference>
<dbReference type="NCBIfam" id="NF001843">
    <property type="entry name" value="PRK00567.1-4"/>
    <property type="match status" value="1"/>
</dbReference>
<dbReference type="PANTHER" id="PTHR30266:SF2">
    <property type="entry name" value="LARGE-CONDUCTANCE MECHANOSENSITIVE CHANNEL"/>
    <property type="match status" value="1"/>
</dbReference>
<dbReference type="PANTHER" id="PTHR30266">
    <property type="entry name" value="MECHANOSENSITIVE CHANNEL MSCL"/>
    <property type="match status" value="1"/>
</dbReference>
<dbReference type="Pfam" id="PF01741">
    <property type="entry name" value="MscL"/>
    <property type="match status" value="1"/>
</dbReference>
<dbReference type="PRINTS" id="PR01264">
    <property type="entry name" value="MECHCHANNEL"/>
</dbReference>
<dbReference type="SUPFAM" id="SSF81330">
    <property type="entry name" value="Gated mechanosensitive channel"/>
    <property type="match status" value="1"/>
</dbReference>
<dbReference type="PROSITE" id="PS01327">
    <property type="entry name" value="MSCL"/>
    <property type="match status" value="1"/>
</dbReference>
<organism>
    <name type="scientific">Xanthomonas axonopodis pv. citri (strain 306)</name>
    <dbReference type="NCBI Taxonomy" id="190486"/>
    <lineage>
        <taxon>Bacteria</taxon>
        <taxon>Pseudomonadati</taxon>
        <taxon>Pseudomonadota</taxon>
        <taxon>Gammaproteobacteria</taxon>
        <taxon>Lysobacterales</taxon>
        <taxon>Lysobacteraceae</taxon>
        <taxon>Xanthomonas</taxon>
    </lineage>
</organism>
<accession>Q8PHE9</accession>
<sequence>MGMVSEFKQFAMRGNVIDLAVGVVIGAAFGKIVTALVEKIIMPPIGWAIGNVDFSRLAWVLKPAGVDATGKEIPAVAIGYGDFINTVVQFLIIAFAIFLVVKLINRVTHRKPDAPKGPSEEVLLLREIRDALKNDTLKPPGAL</sequence>
<keyword id="KW-0997">Cell inner membrane</keyword>
<keyword id="KW-1003">Cell membrane</keyword>
<keyword id="KW-0407">Ion channel</keyword>
<keyword id="KW-0406">Ion transport</keyword>
<keyword id="KW-0472">Membrane</keyword>
<keyword id="KW-0812">Transmembrane</keyword>
<keyword id="KW-1133">Transmembrane helix</keyword>
<keyword id="KW-0813">Transport</keyword>
<proteinExistence type="inferred from homology"/>
<evidence type="ECO:0000255" key="1">
    <source>
        <dbReference type="HAMAP-Rule" id="MF_00115"/>
    </source>
</evidence>
<name>MSCL_XANAC</name>
<reference key="1">
    <citation type="journal article" date="2002" name="Nature">
        <title>Comparison of the genomes of two Xanthomonas pathogens with differing host specificities.</title>
        <authorList>
            <person name="da Silva A.C.R."/>
            <person name="Ferro J.A."/>
            <person name="Reinach F.C."/>
            <person name="Farah C.S."/>
            <person name="Furlan L.R."/>
            <person name="Quaggio R.B."/>
            <person name="Monteiro-Vitorello C.B."/>
            <person name="Van Sluys M.A."/>
            <person name="Almeida N.F. Jr."/>
            <person name="Alves L.M.C."/>
            <person name="do Amaral A.M."/>
            <person name="Bertolini M.C."/>
            <person name="Camargo L.E.A."/>
            <person name="Camarotte G."/>
            <person name="Cannavan F."/>
            <person name="Cardozo J."/>
            <person name="Chambergo F."/>
            <person name="Ciapina L.P."/>
            <person name="Cicarelli R.M.B."/>
            <person name="Coutinho L.L."/>
            <person name="Cursino-Santos J.R."/>
            <person name="El-Dorry H."/>
            <person name="Faria J.B."/>
            <person name="Ferreira A.J.S."/>
            <person name="Ferreira R.C.C."/>
            <person name="Ferro M.I.T."/>
            <person name="Formighieri E.F."/>
            <person name="Franco M.C."/>
            <person name="Greggio C.C."/>
            <person name="Gruber A."/>
            <person name="Katsuyama A.M."/>
            <person name="Kishi L.T."/>
            <person name="Leite R.P."/>
            <person name="Lemos E.G.M."/>
            <person name="Lemos M.V.F."/>
            <person name="Locali E.C."/>
            <person name="Machado M.A."/>
            <person name="Madeira A.M.B.N."/>
            <person name="Martinez-Rossi N.M."/>
            <person name="Martins E.C."/>
            <person name="Meidanis J."/>
            <person name="Menck C.F.M."/>
            <person name="Miyaki C.Y."/>
            <person name="Moon D.H."/>
            <person name="Moreira L.M."/>
            <person name="Novo M.T.M."/>
            <person name="Okura V.K."/>
            <person name="Oliveira M.C."/>
            <person name="Oliveira V.R."/>
            <person name="Pereira H.A."/>
            <person name="Rossi A."/>
            <person name="Sena J.A.D."/>
            <person name="Silva C."/>
            <person name="de Souza R.F."/>
            <person name="Spinola L.A.F."/>
            <person name="Takita M.A."/>
            <person name="Tamura R.E."/>
            <person name="Teixeira E.C."/>
            <person name="Tezza R.I.D."/>
            <person name="Trindade dos Santos M."/>
            <person name="Truffi D."/>
            <person name="Tsai S.M."/>
            <person name="White F.F."/>
            <person name="Setubal J.C."/>
            <person name="Kitajima J.P."/>
        </authorList>
    </citation>
    <scope>NUCLEOTIDE SEQUENCE [LARGE SCALE GENOMIC DNA]</scope>
    <source>
        <strain>306</strain>
    </source>
</reference>
<feature type="chain" id="PRO_0000238049" description="Large-conductance mechanosensitive channel">
    <location>
        <begin position="1"/>
        <end position="143"/>
    </location>
</feature>
<feature type="transmembrane region" description="Helical" evidence="1">
    <location>
        <begin position="16"/>
        <end position="36"/>
    </location>
</feature>
<feature type="transmembrane region" description="Helical" evidence="1">
    <location>
        <begin position="84"/>
        <end position="104"/>
    </location>
</feature>
<comment type="function">
    <text evidence="1">Channel that opens in response to stretch forces in the membrane lipid bilayer. May participate in the regulation of osmotic pressure changes within the cell.</text>
</comment>
<comment type="subunit">
    <text evidence="1">Homopentamer.</text>
</comment>
<comment type="subcellular location">
    <subcellularLocation>
        <location evidence="1">Cell inner membrane</location>
        <topology evidence="1">Multi-pass membrane protein</topology>
    </subcellularLocation>
</comment>
<comment type="similarity">
    <text evidence="1">Belongs to the MscL family.</text>
</comment>